<comment type="function">
    <text evidence="1">Catalyzes the reduction of the glycolytic intermediate dihydroxyacetone phosphate (DHAP) to sn-glycerol 3-phosphate (G3P), the key precursor for phospholipid synthesis.</text>
</comment>
<comment type="catalytic activity">
    <reaction evidence="1">
        <text>sn-glycerol 3-phosphate + NAD(+) = dihydroxyacetone phosphate + NADH + H(+)</text>
        <dbReference type="Rhea" id="RHEA:11092"/>
        <dbReference type="ChEBI" id="CHEBI:15378"/>
        <dbReference type="ChEBI" id="CHEBI:57540"/>
        <dbReference type="ChEBI" id="CHEBI:57597"/>
        <dbReference type="ChEBI" id="CHEBI:57642"/>
        <dbReference type="ChEBI" id="CHEBI:57945"/>
        <dbReference type="EC" id="1.1.1.94"/>
    </reaction>
    <physiologicalReaction direction="right-to-left" evidence="1">
        <dbReference type="Rhea" id="RHEA:11094"/>
    </physiologicalReaction>
</comment>
<comment type="catalytic activity">
    <reaction evidence="1">
        <text>sn-glycerol 3-phosphate + NADP(+) = dihydroxyacetone phosphate + NADPH + H(+)</text>
        <dbReference type="Rhea" id="RHEA:11096"/>
        <dbReference type="ChEBI" id="CHEBI:15378"/>
        <dbReference type="ChEBI" id="CHEBI:57597"/>
        <dbReference type="ChEBI" id="CHEBI:57642"/>
        <dbReference type="ChEBI" id="CHEBI:57783"/>
        <dbReference type="ChEBI" id="CHEBI:58349"/>
        <dbReference type="EC" id="1.1.1.94"/>
    </reaction>
    <physiologicalReaction direction="right-to-left" evidence="1">
        <dbReference type="Rhea" id="RHEA:11098"/>
    </physiologicalReaction>
</comment>
<comment type="pathway">
    <text evidence="1">Membrane lipid metabolism; glycerophospholipid metabolism.</text>
</comment>
<comment type="subcellular location">
    <subcellularLocation>
        <location evidence="1">Cytoplasm</location>
    </subcellularLocation>
</comment>
<comment type="similarity">
    <text evidence="1">Belongs to the NAD-dependent glycerol-3-phosphate dehydrogenase family.</text>
</comment>
<dbReference type="EC" id="1.1.1.94" evidence="1"/>
<dbReference type="EMBL" id="CP001108">
    <property type="protein sequence ID" value="ACF47176.1"/>
    <property type="molecule type" value="Genomic_DNA"/>
</dbReference>
<dbReference type="RefSeq" id="WP_012506707.1">
    <property type="nucleotide sequence ID" value="NC_011059.1"/>
</dbReference>
<dbReference type="SMR" id="B4S674"/>
<dbReference type="STRING" id="290512.Paes_2174"/>
<dbReference type="KEGG" id="paa:Paes_2174"/>
<dbReference type="eggNOG" id="COG0240">
    <property type="taxonomic scope" value="Bacteria"/>
</dbReference>
<dbReference type="HOGENOM" id="CLU_033449_0_2_10"/>
<dbReference type="UniPathway" id="UPA00940"/>
<dbReference type="Proteomes" id="UP000002725">
    <property type="component" value="Chromosome"/>
</dbReference>
<dbReference type="GO" id="GO:0005829">
    <property type="term" value="C:cytosol"/>
    <property type="evidence" value="ECO:0007669"/>
    <property type="project" value="TreeGrafter"/>
</dbReference>
<dbReference type="GO" id="GO:0047952">
    <property type="term" value="F:glycerol-3-phosphate dehydrogenase [NAD(P)+] activity"/>
    <property type="evidence" value="ECO:0007669"/>
    <property type="project" value="UniProtKB-UniRule"/>
</dbReference>
<dbReference type="GO" id="GO:0051287">
    <property type="term" value="F:NAD binding"/>
    <property type="evidence" value="ECO:0007669"/>
    <property type="project" value="InterPro"/>
</dbReference>
<dbReference type="GO" id="GO:0005975">
    <property type="term" value="P:carbohydrate metabolic process"/>
    <property type="evidence" value="ECO:0007669"/>
    <property type="project" value="InterPro"/>
</dbReference>
<dbReference type="GO" id="GO:0046167">
    <property type="term" value="P:glycerol-3-phosphate biosynthetic process"/>
    <property type="evidence" value="ECO:0007669"/>
    <property type="project" value="UniProtKB-UniRule"/>
</dbReference>
<dbReference type="GO" id="GO:0046168">
    <property type="term" value="P:glycerol-3-phosphate catabolic process"/>
    <property type="evidence" value="ECO:0007669"/>
    <property type="project" value="InterPro"/>
</dbReference>
<dbReference type="GO" id="GO:0006650">
    <property type="term" value="P:glycerophospholipid metabolic process"/>
    <property type="evidence" value="ECO:0007669"/>
    <property type="project" value="UniProtKB-UniRule"/>
</dbReference>
<dbReference type="GO" id="GO:0008654">
    <property type="term" value="P:phospholipid biosynthetic process"/>
    <property type="evidence" value="ECO:0007669"/>
    <property type="project" value="UniProtKB-KW"/>
</dbReference>
<dbReference type="FunFam" id="1.10.1040.10:FF:000001">
    <property type="entry name" value="Glycerol-3-phosphate dehydrogenase [NAD(P)+]"/>
    <property type="match status" value="1"/>
</dbReference>
<dbReference type="FunFam" id="3.40.50.720:FF:000019">
    <property type="entry name" value="Glycerol-3-phosphate dehydrogenase [NAD(P)+]"/>
    <property type="match status" value="1"/>
</dbReference>
<dbReference type="Gene3D" id="1.10.1040.10">
    <property type="entry name" value="N-(1-d-carboxylethyl)-l-norvaline Dehydrogenase, domain 2"/>
    <property type="match status" value="1"/>
</dbReference>
<dbReference type="Gene3D" id="3.40.50.720">
    <property type="entry name" value="NAD(P)-binding Rossmann-like Domain"/>
    <property type="match status" value="1"/>
</dbReference>
<dbReference type="HAMAP" id="MF_00394">
    <property type="entry name" value="NAD_Glyc3P_dehydrog"/>
    <property type="match status" value="1"/>
</dbReference>
<dbReference type="InterPro" id="IPR008927">
    <property type="entry name" value="6-PGluconate_DH-like_C_sf"/>
</dbReference>
<dbReference type="InterPro" id="IPR013328">
    <property type="entry name" value="6PGD_dom2"/>
</dbReference>
<dbReference type="InterPro" id="IPR006168">
    <property type="entry name" value="G3P_DH_NAD-dep"/>
</dbReference>
<dbReference type="InterPro" id="IPR006109">
    <property type="entry name" value="G3P_DH_NAD-dep_C"/>
</dbReference>
<dbReference type="InterPro" id="IPR011128">
    <property type="entry name" value="G3P_DH_NAD-dep_N"/>
</dbReference>
<dbReference type="InterPro" id="IPR036291">
    <property type="entry name" value="NAD(P)-bd_dom_sf"/>
</dbReference>
<dbReference type="NCBIfam" id="NF000940">
    <property type="entry name" value="PRK00094.1-2"/>
    <property type="match status" value="1"/>
</dbReference>
<dbReference type="NCBIfam" id="NF000941">
    <property type="entry name" value="PRK00094.1-3"/>
    <property type="match status" value="1"/>
</dbReference>
<dbReference type="NCBIfam" id="NF000942">
    <property type="entry name" value="PRK00094.1-4"/>
    <property type="match status" value="1"/>
</dbReference>
<dbReference type="PANTHER" id="PTHR11728">
    <property type="entry name" value="GLYCEROL-3-PHOSPHATE DEHYDROGENASE"/>
    <property type="match status" value="1"/>
</dbReference>
<dbReference type="PANTHER" id="PTHR11728:SF1">
    <property type="entry name" value="GLYCEROL-3-PHOSPHATE DEHYDROGENASE [NAD(+)] 2, CHLOROPLASTIC"/>
    <property type="match status" value="1"/>
</dbReference>
<dbReference type="Pfam" id="PF07479">
    <property type="entry name" value="NAD_Gly3P_dh_C"/>
    <property type="match status" value="1"/>
</dbReference>
<dbReference type="Pfam" id="PF01210">
    <property type="entry name" value="NAD_Gly3P_dh_N"/>
    <property type="match status" value="1"/>
</dbReference>
<dbReference type="PIRSF" id="PIRSF000114">
    <property type="entry name" value="Glycerol-3-P_dh"/>
    <property type="match status" value="1"/>
</dbReference>
<dbReference type="PRINTS" id="PR00077">
    <property type="entry name" value="GPDHDRGNASE"/>
</dbReference>
<dbReference type="SUPFAM" id="SSF48179">
    <property type="entry name" value="6-phosphogluconate dehydrogenase C-terminal domain-like"/>
    <property type="match status" value="1"/>
</dbReference>
<dbReference type="SUPFAM" id="SSF51735">
    <property type="entry name" value="NAD(P)-binding Rossmann-fold domains"/>
    <property type="match status" value="1"/>
</dbReference>
<dbReference type="PROSITE" id="PS00957">
    <property type="entry name" value="NAD_G3PDH"/>
    <property type="match status" value="1"/>
</dbReference>
<sequence length="332" mass="35133">MIITVLGAGSWGTTLAVLLANKGYAVSLWAHRPDFAQELARTRENVKYLPGVTFPDGLEIAQDINAAATDADVIVAAVPSQAVRETMELLAGINLDGKLMVNVAKGIELGSGKRLSEVILETLSGVDPSMVSVLYGPSHAEEVSGLQPTTVVAASSNLDTAKRVQEIFHTRMFRVYVNTDIVGVEIAGSVKNIIAIAAGIADGIGFGDNAKAAIITRGLAEISRLSAAMGGDPMTVSGLSGIGDLVVTCLSKHSRNRYVGEQIGKGRSLDDVISHMNMVAEGVLTTKAVVELSNRLGVDMPITRTVYAMLFEHKPVEDAILDLMTRDPKPEL</sequence>
<reference key="1">
    <citation type="submission" date="2008-06" db="EMBL/GenBank/DDBJ databases">
        <title>Complete sequence of chromosome of Prosthecochloris aestuarii DSM 271.</title>
        <authorList>
            <consortium name="US DOE Joint Genome Institute"/>
            <person name="Lucas S."/>
            <person name="Copeland A."/>
            <person name="Lapidus A."/>
            <person name="Glavina del Rio T."/>
            <person name="Dalin E."/>
            <person name="Tice H."/>
            <person name="Bruce D."/>
            <person name="Goodwin L."/>
            <person name="Pitluck S."/>
            <person name="Schmutz J."/>
            <person name="Larimer F."/>
            <person name="Land M."/>
            <person name="Hauser L."/>
            <person name="Kyrpides N."/>
            <person name="Anderson I."/>
            <person name="Liu Z."/>
            <person name="Li T."/>
            <person name="Zhao F."/>
            <person name="Overmann J."/>
            <person name="Bryant D.A."/>
            <person name="Richardson P."/>
        </authorList>
    </citation>
    <scope>NUCLEOTIDE SEQUENCE [LARGE SCALE GENOMIC DNA]</scope>
    <source>
        <strain>DSM 271 / SK 413</strain>
    </source>
</reference>
<feature type="chain" id="PRO_1000123172" description="Glycerol-3-phosphate dehydrogenase [NAD(P)+]">
    <location>
        <begin position="1"/>
        <end position="332"/>
    </location>
</feature>
<feature type="active site" description="Proton acceptor" evidence="1">
    <location>
        <position position="191"/>
    </location>
</feature>
<feature type="binding site" evidence="1">
    <location>
        <position position="10"/>
    </location>
    <ligand>
        <name>NADPH</name>
        <dbReference type="ChEBI" id="CHEBI:57783"/>
    </ligand>
</feature>
<feature type="binding site" evidence="1">
    <location>
        <position position="11"/>
    </location>
    <ligand>
        <name>NADPH</name>
        <dbReference type="ChEBI" id="CHEBI:57783"/>
    </ligand>
</feature>
<feature type="binding site" evidence="1">
    <location>
        <position position="31"/>
    </location>
    <ligand>
        <name>NADPH</name>
        <dbReference type="ChEBI" id="CHEBI:57783"/>
    </ligand>
</feature>
<feature type="binding site" evidence="1">
    <location>
        <position position="32"/>
    </location>
    <ligand>
        <name>NADPH</name>
        <dbReference type="ChEBI" id="CHEBI:57783"/>
    </ligand>
</feature>
<feature type="binding site" evidence="1">
    <location>
        <position position="105"/>
    </location>
    <ligand>
        <name>NADPH</name>
        <dbReference type="ChEBI" id="CHEBI:57783"/>
    </ligand>
</feature>
<feature type="binding site" evidence="1">
    <location>
        <position position="105"/>
    </location>
    <ligand>
        <name>sn-glycerol 3-phosphate</name>
        <dbReference type="ChEBI" id="CHEBI:57597"/>
    </ligand>
</feature>
<feature type="binding site" evidence="1">
    <location>
        <position position="136"/>
    </location>
    <ligand>
        <name>sn-glycerol 3-phosphate</name>
        <dbReference type="ChEBI" id="CHEBI:57597"/>
    </ligand>
</feature>
<feature type="binding site" evidence="1">
    <location>
        <position position="138"/>
    </location>
    <ligand>
        <name>sn-glycerol 3-phosphate</name>
        <dbReference type="ChEBI" id="CHEBI:57597"/>
    </ligand>
</feature>
<feature type="binding site" evidence="1">
    <location>
        <position position="140"/>
    </location>
    <ligand>
        <name>NADPH</name>
        <dbReference type="ChEBI" id="CHEBI:57783"/>
    </ligand>
</feature>
<feature type="binding site" evidence="1">
    <location>
        <position position="191"/>
    </location>
    <ligand>
        <name>sn-glycerol 3-phosphate</name>
        <dbReference type="ChEBI" id="CHEBI:57597"/>
    </ligand>
</feature>
<feature type="binding site" evidence="1">
    <location>
        <position position="244"/>
    </location>
    <ligand>
        <name>sn-glycerol 3-phosphate</name>
        <dbReference type="ChEBI" id="CHEBI:57597"/>
    </ligand>
</feature>
<feature type="binding site" evidence="1">
    <location>
        <position position="254"/>
    </location>
    <ligand>
        <name>sn-glycerol 3-phosphate</name>
        <dbReference type="ChEBI" id="CHEBI:57597"/>
    </ligand>
</feature>
<feature type="binding site" evidence="1">
    <location>
        <position position="255"/>
    </location>
    <ligand>
        <name>NADPH</name>
        <dbReference type="ChEBI" id="CHEBI:57783"/>
    </ligand>
</feature>
<feature type="binding site" evidence="1">
    <location>
        <position position="255"/>
    </location>
    <ligand>
        <name>sn-glycerol 3-phosphate</name>
        <dbReference type="ChEBI" id="CHEBI:57597"/>
    </ligand>
</feature>
<feature type="binding site" evidence="1">
    <location>
        <position position="256"/>
    </location>
    <ligand>
        <name>sn-glycerol 3-phosphate</name>
        <dbReference type="ChEBI" id="CHEBI:57597"/>
    </ligand>
</feature>
<feature type="binding site" evidence="1">
    <location>
        <position position="279"/>
    </location>
    <ligand>
        <name>NADPH</name>
        <dbReference type="ChEBI" id="CHEBI:57783"/>
    </ligand>
</feature>
<feature type="binding site" evidence="1">
    <location>
        <position position="281"/>
    </location>
    <ligand>
        <name>NADPH</name>
        <dbReference type="ChEBI" id="CHEBI:57783"/>
    </ligand>
</feature>
<protein>
    <recommendedName>
        <fullName evidence="1">Glycerol-3-phosphate dehydrogenase [NAD(P)+]</fullName>
        <ecNumber evidence="1">1.1.1.94</ecNumber>
    </recommendedName>
    <alternativeName>
        <fullName evidence="1">NAD(P)(+)-dependent glycerol-3-phosphate dehydrogenase</fullName>
    </alternativeName>
    <alternativeName>
        <fullName evidence="1">NAD(P)H-dependent dihydroxyacetone-phosphate reductase</fullName>
    </alternativeName>
</protein>
<evidence type="ECO:0000255" key="1">
    <source>
        <dbReference type="HAMAP-Rule" id="MF_00394"/>
    </source>
</evidence>
<gene>
    <name evidence="1" type="primary">gpsA</name>
    <name type="ordered locus">Paes_2174</name>
</gene>
<keyword id="KW-0963">Cytoplasm</keyword>
<keyword id="KW-0444">Lipid biosynthesis</keyword>
<keyword id="KW-0443">Lipid metabolism</keyword>
<keyword id="KW-0520">NAD</keyword>
<keyword id="KW-0521">NADP</keyword>
<keyword id="KW-0547">Nucleotide-binding</keyword>
<keyword id="KW-0560">Oxidoreductase</keyword>
<keyword id="KW-0594">Phospholipid biosynthesis</keyword>
<keyword id="KW-1208">Phospholipid metabolism</keyword>
<name>GPDA_PROA2</name>
<accession>B4S674</accession>
<organism>
    <name type="scientific">Prosthecochloris aestuarii (strain DSM 271 / SK 413)</name>
    <dbReference type="NCBI Taxonomy" id="290512"/>
    <lineage>
        <taxon>Bacteria</taxon>
        <taxon>Pseudomonadati</taxon>
        <taxon>Chlorobiota</taxon>
        <taxon>Chlorobiia</taxon>
        <taxon>Chlorobiales</taxon>
        <taxon>Chlorobiaceae</taxon>
        <taxon>Prosthecochloris</taxon>
    </lineage>
</organism>
<proteinExistence type="inferred from homology"/>